<protein>
    <recommendedName>
        <fullName evidence="1">Protein GrpE</fullName>
    </recommendedName>
    <alternativeName>
        <fullName evidence="1">HSP-70 cofactor</fullName>
    </alternativeName>
</protein>
<gene>
    <name evidence="1" type="primary">grpE</name>
    <name type="ordered locus">SSA_2008</name>
</gene>
<sequence length="178" mass="20353">MAKHKQEEHPEDVEVKEEAVETAEQAESASPEKSELELANERAEDFENKYLRAHAEMQNIQRRANEERQQLQRYRSQDLAKAILPSIDNLERALAVEGLTDDVKKGLEMVQESLIHALKEEGIEEIPADGAFDHNYHMAIQTVPADDEHPADTIAQVFQKGYKLHDRILRPAMVVVYN</sequence>
<dbReference type="EMBL" id="CP000387">
    <property type="protein sequence ID" value="ABN45378.1"/>
    <property type="molecule type" value="Genomic_DNA"/>
</dbReference>
<dbReference type="RefSeq" id="WP_002905347.1">
    <property type="nucleotide sequence ID" value="NC_009009.1"/>
</dbReference>
<dbReference type="RefSeq" id="YP_001035928.1">
    <property type="nucleotide sequence ID" value="NC_009009.1"/>
</dbReference>
<dbReference type="SMR" id="A3CQC3"/>
<dbReference type="STRING" id="388919.SSA_2008"/>
<dbReference type="KEGG" id="ssa:SSA_2008"/>
<dbReference type="PATRIC" id="fig|388919.9.peg.1903"/>
<dbReference type="eggNOG" id="COG0576">
    <property type="taxonomic scope" value="Bacteria"/>
</dbReference>
<dbReference type="HOGENOM" id="CLU_057217_6_3_9"/>
<dbReference type="OrthoDB" id="9812586at2"/>
<dbReference type="Proteomes" id="UP000002148">
    <property type="component" value="Chromosome"/>
</dbReference>
<dbReference type="GO" id="GO:0005737">
    <property type="term" value="C:cytoplasm"/>
    <property type="evidence" value="ECO:0007669"/>
    <property type="project" value="UniProtKB-SubCell"/>
</dbReference>
<dbReference type="GO" id="GO:0000774">
    <property type="term" value="F:adenyl-nucleotide exchange factor activity"/>
    <property type="evidence" value="ECO:0007669"/>
    <property type="project" value="InterPro"/>
</dbReference>
<dbReference type="GO" id="GO:0042803">
    <property type="term" value="F:protein homodimerization activity"/>
    <property type="evidence" value="ECO:0007669"/>
    <property type="project" value="InterPro"/>
</dbReference>
<dbReference type="GO" id="GO:0051087">
    <property type="term" value="F:protein-folding chaperone binding"/>
    <property type="evidence" value="ECO:0007669"/>
    <property type="project" value="InterPro"/>
</dbReference>
<dbReference type="GO" id="GO:0051082">
    <property type="term" value="F:unfolded protein binding"/>
    <property type="evidence" value="ECO:0007669"/>
    <property type="project" value="TreeGrafter"/>
</dbReference>
<dbReference type="GO" id="GO:0006457">
    <property type="term" value="P:protein folding"/>
    <property type="evidence" value="ECO:0007669"/>
    <property type="project" value="InterPro"/>
</dbReference>
<dbReference type="CDD" id="cd00446">
    <property type="entry name" value="GrpE"/>
    <property type="match status" value="1"/>
</dbReference>
<dbReference type="FunFam" id="2.30.22.10:FF:000004">
    <property type="entry name" value="Protein GrpE"/>
    <property type="match status" value="1"/>
</dbReference>
<dbReference type="Gene3D" id="3.90.20.20">
    <property type="match status" value="1"/>
</dbReference>
<dbReference type="Gene3D" id="2.30.22.10">
    <property type="entry name" value="Head domain of nucleotide exchange factor GrpE"/>
    <property type="match status" value="1"/>
</dbReference>
<dbReference type="HAMAP" id="MF_01151">
    <property type="entry name" value="GrpE"/>
    <property type="match status" value="1"/>
</dbReference>
<dbReference type="InterPro" id="IPR000740">
    <property type="entry name" value="GrpE"/>
</dbReference>
<dbReference type="InterPro" id="IPR013805">
    <property type="entry name" value="GrpE_coiled_coil"/>
</dbReference>
<dbReference type="InterPro" id="IPR009012">
    <property type="entry name" value="GrpE_head"/>
</dbReference>
<dbReference type="NCBIfam" id="NF010738">
    <property type="entry name" value="PRK14140.1"/>
    <property type="match status" value="1"/>
</dbReference>
<dbReference type="NCBIfam" id="NF010753">
    <property type="entry name" value="PRK14156.1"/>
    <property type="match status" value="1"/>
</dbReference>
<dbReference type="NCBIfam" id="NF010759">
    <property type="entry name" value="PRK14162.1"/>
    <property type="match status" value="1"/>
</dbReference>
<dbReference type="PANTHER" id="PTHR21237">
    <property type="entry name" value="GRPE PROTEIN"/>
    <property type="match status" value="1"/>
</dbReference>
<dbReference type="PANTHER" id="PTHR21237:SF23">
    <property type="entry name" value="GRPE PROTEIN HOMOLOG, MITOCHONDRIAL"/>
    <property type="match status" value="1"/>
</dbReference>
<dbReference type="Pfam" id="PF01025">
    <property type="entry name" value="GrpE"/>
    <property type="match status" value="1"/>
</dbReference>
<dbReference type="PRINTS" id="PR00773">
    <property type="entry name" value="GRPEPROTEIN"/>
</dbReference>
<dbReference type="SUPFAM" id="SSF58014">
    <property type="entry name" value="Coiled-coil domain of nucleotide exchange factor GrpE"/>
    <property type="match status" value="1"/>
</dbReference>
<dbReference type="SUPFAM" id="SSF51064">
    <property type="entry name" value="Head domain of nucleotide exchange factor GrpE"/>
    <property type="match status" value="1"/>
</dbReference>
<dbReference type="PROSITE" id="PS01071">
    <property type="entry name" value="GRPE"/>
    <property type="match status" value="1"/>
</dbReference>
<feature type="chain" id="PRO_1000053652" description="Protein GrpE">
    <location>
        <begin position="1"/>
        <end position="178"/>
    </location>
</feature>
<feature type="region of interest" description="Disordered" evidence="2">
    <location>
        <begin position="1"/>
        <end position="42"/>
    </location>
</feature>
<feature type="compositionally biased region" description="Basic and acidic residues" evidence="2">
    <location>
        <begin position="1"/>
        <end position="19"/>
    </location>
</feature>
<feature type="compositionally biased region" description="Basic and acidic residues" evidence="2">
    <location>
        <begin position="30"/>
        <end position="42"/>
    </location>
</feature>
<proteinExistence type="inferred from homology"/>
<comment type="function">
    <text evidence="1">Participates actively in the response to hyperosmotic and heat shock by preventing the aggregation of stress-denatured proteins, in association with DnaK and GrpE. It is the nucleotide exchange factor for DnaK and may function as a thermosensor. Unfolded proteins bind initially to DnaJ; upon interaction with the DnaJ-bound protein, DnaK hydrolyzes its bound ATP, resulting in the formation of a stable complex. GrpE releases ADP from DnaK; ATP binding to DnaK triggers the release of the substrate protein, thus completing the reaction cycle. Several rounds of ATP-dependent interactions between DnaJ, DnaK and GrpE are required for fully efficient folding.</text>
</comment>
<comment type="subunit">
    <text evidence="1">Homodimer.</text>
</comment>
<comment type="subcellular location">
    <subcellularLocation>
        <location evidence="1">Cytoplasm</location>
    </subcellularLocation>
</comment>
<comment type="similarity">
    <text evidence="1">Belongs to the GrpE family.</text>
</comment>
<keyword id="KW-0143">Chaperone</keyword>
<keyword id="KW-0963">Cytoplasm</keyword>
<keyword id="KW-1185">Reference proteome</keyword>
<keyword id="KW-0346">Stress response</keyword>
<accession>A3CQC3</accession>
<evidence type="ECO:0000255" key="1">
    <source>
        <dbReference type="HAMAP-Rule" id="MF_01151"/>
    </source>
</evidence>
<evidence type="ECO:0000256" key="2">
    <source>
        <dbReference type="SAM" id="MobiDB-lite"/>
    </source>
</evidence>
<organism>
    <name type="scientific">Streptococcus sanguinis (strain SK36)</name>
    <dbReference type="NCBI Taxonomy" id="388919"/>
    <lineage>
        <taxon>Bacteria</taxon>
        <taxon>Bacillati</taxon>
        <taxon>Bacillota</taxon>
        <taxon>Bacilli</taxon>
        <taxon>Lactobacillales</taxon>
        <taxon>Streptococcaceae</taxon>
        <taxon>Streptococcus</taxon>
    </lineage>
</organism>
<reference key="1">
    <citation type="journal article" date="2007" name="J. Bacteriol.">
        <title>Genome of the opportunistic pathogen Streptococcus sanguinis.</title>
        <authorList>
            <person name="Xu P."/>
            <person name="Alves J.M."/>
            <person name="Kitten T."/>
            <person name="Brown A."/>
            <person name="Chen Z."/>
            <person name="Ozaki L.S."/>
            <person name="Manque P."/>
            <person name="Ge X."/>
            <person name="Serrano M.G."/>
            <person name="Puiu D."/>
            <person name="Hendricks S."/>
            <person name="Wang Y."/>
            <person name="Chaplin M.D."/>
            <person name="Akan D."/>
            <person name="Paik S."/>
            <person name="Peterson D.L."/>
            <person name="Macrina F.L."/>
            <person name="Buck G.A."/>
        </authorList>
    </citation>
    <scope>NUCLEOTIDE SEQUENCE [LARGE SCALE GENOMIC DNA]</scope>
    <source>
        <strain>SK36</strain>
    </source>
</reference>
<name>GRPE_STRSV</name>